<organism>
    <name type="scientific">Staphylococcus aureus (strain MSSA476)</name>
    <dbReference type="NCBI Taxonomy" id="282459"/>
    <lineage>
        <taxon>Bacteria</taxon>
        <taxon>Bacillati</taxon>
        <taxon>Bacillota</taxon>
        <taxon>Bacilli</taxon>
        <taxon>Bacillales</taxon>
        <taxon>Staphylococcaceae</taxon>
        <taxon>Staphylococcus</taxon>
    </lineage>
</organism>
<protein>
    <recommendedName>
        <fullName>Staphylokinase</fullName>
    </recommendedName>
</protein>
<comment type="function">
    <text evidence="1">Potent plasminogen activator that converts plasminogen into plasmin. It forms a 1:1 complex with plasmin, which in turn activates other plasminogen molecules (By similarity).</text>
</comment>
<comment type="subcellular location">
    <subcellularLocation>
        <location evidence="1">Secreted</location>
    </subcellularLocation>
</comment>
<comment type="similarity">
    <text evidence="2">Belongs to the staphylokinase family.</text>
</comment>
<reference key="1">
    <citation type="journal article" date="2004" name="Proc. Natl. Acad. Sci. U.S.A.">
        <title>Complete genomes of two clinical Staphylococcus aureus strains: evidence for the rapid evolution of virulence and drug resistance.</title>
        <authorList>
            <person name="Holden M.T.G."/>
            <person name="Feil E.J."/>
            <person name="Lindsay J.A."/>
            <person name="Peacock S.J."/>
            <person name="Day N.P.J."/>
            <person name="Enright M.C."/>
            <person name="Foster T.J."/>
            <person name="Moore C.E."/>
            <person name="Hurst L."/>
            <person name="Atkin R."/>
            <person name="Barron A."/>
            <person name="Bason N."/>
            <person name="Bentley S.D."/>
            <person name="Chillingworth C."/>
            <person name="Chillingworth T."/>
            <person name="Churcher C."/>
            <person name="Clark L."/>
            <person name="Corton C."/>
            <person name="Cronin A."/>
            <person name="Doggett J."/>
            <person name="Dowd L."/>
            <person name="Feltwell T."/>
            <person name="Hance Z."/>
            <person name="Harris B."/>
            <person name="Hauser H."/>
            <person name="Holroyd S."/>
            <person name="Jagels K."/>
            <person name="James K.D."/>
            <person name="Lennard N."/>
            <person name="Line A."/>
            <person name="Mayes R."/>
            <person name="Moule S."/>
            <person name="Mungall K."/>
            <person name="Ormond D."/>
            <person name="Quail M.A."/>
            <person name="Rabbinowitsch E."/>
            <person name="Rutherford K.M."/>
            <person name="Sanders M."/>
            <person name="Sharp S."/>
            <person name="Simmonds M."/>
            <person name="Stevens K."/>
            <person name="Whitehead S."/>
            <person name="Barrell B.G."/>
            <person name="Spratt B.G."/>
            <person name="Parkhill J."/>
        </authorList>
    </citation>
    <scope>NUCLEOTIDE SEQUENCE [LARGE SCALE GENOMIC DNA]</scope>
    <source>
        <strain>MSSA476</strain>
    </source>
</reference>
<gene>
    <name type="primary">sak</name>
    <name type="ordered locus">SAS1868</name>
</gene>
<proteinExistence type="inferred from homology"/>
<accession>Q6G7Z1</accession>
<keyword id="KW-0617">Plasminogen activation</keyword>
<keyword id="KW-0964">Secreted</keyword>
<keyword id="KW-0732">Signal</keyword>
<evidence type="ECO:0000250" key="1"/>
<evidence type="ECO:0000305" key="2"/>
<sequence length="163" mass="18490">MLKRSLLFLTVLLLLFSFSSITNEVSASSSFDKGKYKKGDDASYFEPTGPYLMVNVTGVDGKGNELLSPHYVEFPIKPGTTLTKEKIEYYVEWALDATAYKEFRVVELDPSAKIEVTYYDKNKKKEETKSFPITEKGFVVPDLSEHIKNPGFNLITKVVIEKK</sequence>
<dbReference type="EMBL" id="BX571857">
    <property type="protein sequence ID" value="CAG43674.1"/>
    <property type="molecule type" value="Genomic_DNA"/>
</dbReference>
<dbReference type="RefSeq" id="WP_000920038.1">
    <property type="nucleotide sequence ID" value="NC_002953.3"/>
</dbReference>
<dbReference type="BMRB" id="Q6G7Z1"/>
<dbReference type="SMR" id="Q6G7Z1"/>
<dbReference type="KEGG" id="sas:SAS1868"/>
<dbReference type="HOGENOM" id="CLU_137975_0_0_9"/>
<dbReference type="PRO" id="PR:Q6G7Z1"/>
<dbReference type="GO" id="GO:0005576">
    <property type="term" value="C:extracellular region"/>
    <property type="evidence" value="ECO:0007669"/>
    <property type="project" value="UniProtKB-SubCell"/>
</dbReference>
<dbReference type="Gene3D" id="3.10.20.130">
    <property type="match status" value="1"/>
</dbReference>
<dbReference type="InterPro" id="IPR004093">
    <property type="entry name" value="SAK"/>
</dbReference>
<dbReference type="InterPro" id="IPR036120">
    <property type="entry name" value="SAK/SK_sf"/>
</dbReference>
<dbReference type="Pfam" id="PF02821">
    <property type="entry name" value="Staphylokinase"/>
    <property type="match status" value="1"/>
</dbReference>
<dbReference type="SUPFAM" id="SSF54328">
    <property type="entry name" value="Staphylokinase/streptokinase"/>
    <property type="match status" value="1"/>
</dbReference>
<name>SAK_STAAS</name>
<feature type="signal peptide" evidence="1">
    <location>
        <begin position="1"/>
        <end position="27"/>
    </location>
</feature>
<feature type="chain" id="PRO_0000031602" description="Staphylokinase">
    <location>
        <begin position="28"/>
        <end position="163"/>
    </location>
</feature>